<organism>
    <name type="scientific">Ehrlichia ruminantium (strain Gardel)</name>
    <dbReference type="NCBI Taxonomy" id="302409"/>
    <lineage>
        <taxon>Bacteria</taxon>
        <taxon>Pseudomonadati</taxon>
        <taxon>Pseudomonadota</taxon>
        <taxon>Alphaproteobacteria</taxon>
        <taxon>Rickettsiales</taxon>
        <taxon>Anaplasmataceae</taxon>
        <taxon>Ehrlichia</taxon>
    </lineage>
</organism>
<sequence>MPYKKDYKRLAYNTLGYLGEVLIILFLKCKLYHIIKHRYRCPLGEIDIIAHKNKQLVFIEVKTSLFNKNIPITYKQQKSILKSAKYFIAFHRKFANYSIRFDLYFFSLSTGLTHIPNAWQEPQVVYK</sequence>
<evidence type="ECO:0000255" key="1">
    <source>
        <dbReference type="HAMAP-Rule" id="MF_00048"/>
    </source>
</evidence>
<feature type="chain" id="PRO_0000336172" description="UPF0102 protein ERGA_CDS_00540">
    <location>
        <begin position="1"/>
        <end position="127"/>
    </location>
</feature>
<accession>Q5FF38</accession>
<gene>
    <name type="ordered locus">ERGA_CDS_00540</name>
</gene>
<protein>
    <recommendedName>
        <fullName evidence="1">UPF0102 protein ERGA_CDS_00540</fullName>
    </recommendedName>
</protein>
<comment type="similarity">
    <text evidence="1">Belongs to the UPF0102 family.</text>
</comment>
<proteinExistence type="inferred from homology"/>
<reference key="1">
    <citation type="journal article" date="2006" name="J. Bacteriol.">
        <title>Comparative genomic analysis of three strains of Ehrlichia ruminantium reveals an active process of genome size plasticity.</title>
        <authorList>
            <person name="Frutos R."/>
            <person name="Viari A."/>
            <person name="Ferraz C."/>
            <person name="Morgat A."/>
            <person name="Eychenie S."/>
            <person name="Kandassamy Y."/>
            <person name="Chantal I."/>
            <person name="Bensaid A."/>
            <person name="Coissac E."/>
            <person name="Vachiery N."/>
            <person name="Demaille J."/>
            <person name="Martinez D."/>
        </authorList>
    </citation>
    <scope>NUCLEOTIDE SEQUENCE [LARGE SCALE GENOMIC DNA]</scope>
    <source>
        <strain>Gardel</strain>
    </source>
</reference>
<dbReference type="EMBL" id="CR925677">
    <property type="protein sequence ID" value="CAI27506.1"/>
    <property type="molecule type" value="Genomic_DNA"/>
</dbReference>
<dbReference type="RefSeq" id="WP_011255256.1">
    <property type="nucleotide sequence ID" value="NC_006831.1"/>
</dbReference>
<dbReference type="SMR" id="Q5FF38"/>
<dbReference type="KEGG" id="erg:ERGA_CDS_00540"/>
<dbReference type="HOGENOM" id="CLU_115353_0_4_5"/>
<dbReference type="OrthoDB" id="9812968at2"/>
<dbReference type="Proteomes" id="UP000000533">
    <property type="component" value="Chromosome"/>
</dbReference>
<dbReference type="GO" id="GO:0003676">
    <property type="term" value="F:nucleic acid binding"/>
    <property type="evidence" value="ECO:0007669"/>
    <property type="project" value="InterPro"/>
</dbReference>
<dbReference type="Gene3D" id="3.40.1350.10">
    <property type="match status" value="1"/>
</dbReference>
<dbReference type="HAMAP" id="MF_00048">
    <property type="entry name" value="UPF0102"/>
    <property type="match status" value="1"/>
</dbReference>
<dbReference type="InterPro" id="IPR011335">
    <property type="entry name" value="Restrct_endonuc-II-like"/>
</dbReference>
<dbReference type="InterPro" id="IPR011856">
    <property type="entry name" value="tRNA_endonuc-like_dom_sf"/>
</dbReference>
<dbReference type="InterPro" id="IPR003509">
    <property type="entry name" value="UPF0102_YraN-like"/>
</dbReference>
<dbReference type="NCBIfam" id="NF011276">
    <property type="entry name" value="PRK14683.1"/>
    <property type="match status" value="1"/>
</dbReference>
<dbReference type="PANTHER" id="PTHR34039">
    <property type="entry name" value="UPF0102 PROTEIN YRAN"/>
    <property type="match status" value="1"/>
</dbReference>
<dbReference type="PANTHER" id="PTHR34039:SF1">
    <property type="entry name" value="UPF0102 PROTEIN YRAN"/>
    <property type="match status" value="1"/>
</dbReference>
<dbReference type="Pfam" id="PF02021">
    <property type="entry name" value="UPF0102"/>
    <property type="match status" value="1"/>
</dbReference>
<dbReference type="SUPFAM" id="SSF52980">
    <property type="entry name" value="Restriction endonuclease-like"/>
    <property type="match status" value="1"/>
</dbReference>
<name>Y054_EHRRG</name>